<name>TRPC_SYNP6</name>
<keyword id="KW-0028">Amino-acid biosynthesis</keyword>
<keyword id="KW-0057">Aromatic amino acid biosynthesis</keyword>
<keyword id="KW-0210">Decarboxylase</keyword>
<keyword id="KW-0456">Lyase</keyword>
<keyword id="KW-0822">Tryptophan biosynthesis</keyword>
<feature type="chain" id="PRO_1000018557" description="Indole-3-glycerol phosphate synthase">
    <location>
        <begin position="1"/>
        <end position="295"/>
    </location>
</feature>
<proteinExistence type="inferred from homology"/>
<protein>
    <recommendedName>
        <fullName evidence="1">Indole-3-glycerol phosphate synthase</fullName>
        <shortName evidence="1">IGPS</shortName>
        <ecNumber evidence="1">4.1.1.48</ecNumber>
    </recommendedName>
</protein>
<evidence type="ECO:0000255" key="1">
    <source>
        <dbReference type="HAMAP-Rule" id="MF_00134"/>
    </source>
</evidence>
<accession>Q5N575</accession>
<organism>
    <name type="scientific">Synechococcus sp. (strain ATCC 27144 / PCC 6301 / SAUG 1402/1)</name>
    <name type="common">Anacystis nidulans</name>
    <dbReference type="NCBI Taxonomy" id="269084"/>
    <lineage>
        <taxon>Bacteria</taxon>
        <taxon>Bacillati</taxon>
        <taxon>Cyanobacteriota</taxon>
        <taxon>Cyanophyceae</taxon>
        <taxon>Synechococcales</taxon>
        <taxon>Synechococcaceae</taxon>
        <taxon>Synechococcus</taxon>
    </lineage>
</organism>
<comment type="catalytic activity">
    <reaction evidence="1">
        <text>1-(2-carboxyphenylamino)-1-deoxy-D-ribulose 5-phosphate + H(+) = (1S,2R)-1-C-(indol-3-yl)glycerol 3-phosphate + CO2 + H2O</text>
        <dbReference type="Rhea" id="RHEA:23476"/>
        <dbReference type="ChEBI" id="CHEBI:15377"/>
        <dbReference type="ChEBI" id="CHEBI:15378"/>
        <dbReference type="ChEBI" id="CHEBI:16526"/>
        <dbReference type="ChEBI" id="CHEBI:58613"/>
        <dbReference type="ChEBI" id="CHEBI:58866"/>
        <dbReference type="EC" id="4.1.1.48"/>
    </reaction>
</comment>
<comment type="pathway">
    <text evidence="1">Amino-acid biosynthesis; L-tryptophan biosynthesis; L-tryptophan from chorismate: step 4/5.</text>
</comment>
<comment type="similarity">
    <text evidence="1">Belongs to the TrpC family.</text>
</comment>
<dbReference type="EC" id="4.1.1.48" evidence="1"/>
<dbReference type="EMBL" id="AP008231">
    <property type="protein sequence ID" value="BAD78543.1"/>
    <property type="molecule type" value="Genomic_DNA"/>
</dbReference>
<dbReference type="RefSeq" id="WP_011242666.1">
    <property type="nucleotide sequence ID" value="NZ_CP085785.1"/>
</dbReference>
<dbReference type="SMR" id="Q5N575"/>
<dbReference type="GeneID" id="72430055"/>
<dbReference type="KEGG" id="syc:syc0353_d"/>
<dbReference type="eggNOG" id="COG0134">
    <property type="taxonomic scope" value="Bacteria"/>
</dbReference>
<dbReference type="UniPathway" id="UPA00035">
    <property type="reaction ID" value="UER00043"/>
</dbReference>
<dbReference type="Proteomes" id="UP000001175">
    <property type="component" value="Chromosome"/>
</dbReference>
<dbReference type="GO" id="GO:0004425">
    <property type="term" value="F:indole-3-glycerol-phosphate synthase activity"/>
    <property type="evidence" value="ECO:0007669"/>
    <property type="project" value="UniProtKB-UniRule"/>
</dbReference>
<dbReference type="GO" id="GO:0004640">
    <property type="term" value="F:phosphoribosylanthranilate isomerase activity"/>
    <property type="evidence" value="ECO:0007669"/>
    <property type="project" value="TreeGrafter"/>
</dbReference>
<dbReference type="GO" id="GO:0000162">
    <property type="term" value="P:L-tryptophan biosynthetic process"/>
    <property type="evidence" value="ECO:0007669"/>
    <property type="project" value="UniProtKB-UniRule"/>
</dbReference>
<dbReference type="CDD" id="cd00331">
    <property type="entry name" value="IGPS"/>
    <property type="match status" value="1"/>
</dbReference>
<dbReference type="FunFam" id="3.20.20.70:FF:000024">
    <property type="entry name" value="Indole-3-glycerol phosphate synthase"/>
    <property type="match status" value="1"/>
</dbReference>
<dbReference type="Gene3D" id="3.20.20.70">
    <property type="entry name" value="Aldolase class I"/>
    <property type="match status" value="1"/>
</dbReference>
<dbReference type="HAMAP" id="MF_00134_B">
    <property type="entry name" value="IGPS_B"/>
    <property type="match status" value="1"/>
</dbReference>
<dbReference type="InterPro" id="IPR013785">
    <property type="entry name" value="Aldolase_TIM"/>
</dbReference>
<dbReference type="InterPro" id="IPR045186">
    <property type="entry name" value="Indole-3-glycerol_P_synth"/>
</dbReference>
<dbReference type="InterPro" id="IPR013798">
    <property type="entry name" value="Indole-3-glycerol_P_synth_dom"/>
</dbReference>
<dbReference type="InterPro" id="IPR001468">
    <property type="entry name" value="Indole-3-GlycerolPSynthase_CS"/>
</dbReference>
<dbReference type="InterPro" id="IPR011060">
    <property type="entry name" value="RibuloseP-bd_barrel"/>
</dbReference>
<dbReference type="NCBIfam" id="NF001372">
    <property type="entry name" value="PRK00278.1-4"/>
    <property type="match status" value="1"/>
</dbReference>
<dbReference type="NCBIfam" id="NF001377">
    <property type="entry name" value="PRK00278.2-4"/>
    <property type="match status" value="1"/>
</dbReference>
<dbReference type="PANTHER" id="PTHR22854:SF2">
    <property type="entry name" value="INDOLE-3-GLYCEROL-PHOSPHATE SYNTHASE"/>
    <property type="match status" value="1"/>
</dbReference>
<dbReference type="PANTHER" id="PTHR22854">
    <property type="entry name" value="TRYPTOPHAN BIOSYNTHESIS PROTEIN"/>
    <property type="match status" value="1"/>
</dbReference>
<dbReference type="Pfam" id="PF00218">
    <property type="entry name" value="IGPS"/>
    <property type="match status" value="1"/>
</dbReference>
<dbReference type="SUPFAM" id="SSF51366">
    <property type="entry name" value="Ribulose-phoshate binding barrel"/>
    <property type="match status" value="1"/>
</dbReference>
<dbReference type="PROSITE" id="PS00614">
    <property type="entry name" value="IGPS"/>
    <property type="match status" value="1"/>
</dbReference>
<reference key="1">
    <citation type="journal article" date="2007" name="Photosyn. Res.">
        <title>Complete nucleotide sequence of the freshwater unicellular cyanobacterium Synechococcus elongatus PCC 6301 chromosome: gene content and organization.</title>
        <authorList>
            <person name="Sugita C."/>
            <person name="Ogata K."/>
            <person name="Shikata M."/>
            <person name="Jikuya H."/>
            <person name="Takano J."/>
            <person name="Furumichi M."/>
            <person name="Kanehisa M."/>
            <person name="Omata T."/>
            <person name="Sugiura M."/>
            <person name="Sugita M."/>
        </authorList>
    </citation>
    <scope>NUCLEOTIDE SEQUENCE [LARGE SCALE GENOMIC DNA]</scope>
    <source>
        <strain>ATCC 27144 / PCC 6301 / SAUG 1402/1</strain>
    </source>
</reference>
<sequence length="295" mass="32402">MEVRRRPPNPAVHVASLTYQVKVPGSSPSNILEEIVWYKEREVNAWREQLPLQQLQNQVRGLTQTPRDFLAALRQAPTRPAVIAEVKKASPSKGVLREDFDPVAIAQAYAANGAACISVLTDEKFFQGGFENLQRVRAAVDVPLLCKDFVIYPYQIYKARLLGADAVLLIAAILSDADLRYFLKIAHSLGLNALVEVHSLPELERVLALDDLRLVGINNRNLKTFVTDLAVTEHLAAQCRDRDLLLVSESGLFTGADLDRVTQAGAQAVLIGESLVKQPDPGLALQQLVGDRPSA</sequence>
<gene>
    <name evidence="1" type="primary">trpC</name>
    <name type="ordered locus">syc0353_d</name>
</gene>